<proteinExistence type="inferred from homology"/>
<sequence>MIASYRGRDFLSMNDLTGEEIEEVLDLASELKIRQKKGISTPILKGKTLAMIFSKNSTRTRVSFEVGMVQLGGYPLFITATDSQLSRGEPIADTARVLSRMVDGIMIRTYSHSEVEELAYYADVPVINGLTDYEHPCQIMADLLTIKEHKGQLRGLKVAWVGDGNNVCHSLMIGAAKVGMEVAVATPPGYEPDQKVSLIAQKETSRWGTKLLLTHDPVEAVTGADVVVTDVWASMGQEAESAERVKVFEPYQVNGELVSHAKQDFIFLHCLPAHRGEEVTAEVIDGEHSVVFAEAENRLHAQKAILTLLLG</sequence>
<comment type="function">
    <text evidence="1">Reversibly catalyzes the transfer of the carbamoyl group from carbamoyl phosphate (CP) to the N(epsilon) atom of ornithine (ORN) to produce L-citrulline.</text>
</comment>
<comment type="catalytic activity">
    <reaction evidence="2">
        <text>carbamoyl phosphate + L-ornithine = L-citrulline + phosphate + H(+)</text>
        <dbReference type="Rhea" id="RHEA:19513"/>
        <dbReference type="ChEBI" id="CHEBI:15378"/>
        <dbReference type="ChEBI" id="CHEBI:43474"/>
        <dbReference type="ChEBI" id="CHEBI:46911"/>
        <dbReference type="ChEBI" id="CHEBI:57743"/>
        <dbReference type="ChEBI" id="CHEBI:58228"/>
        <dbReference type="EC" id="2.1.3.3"/>
    </reaction>
</comment>
<comment type="pathway">
    <text evidence="2">Amino-acid biosynthesis; L-arginine biosynthesis; L-arginine from L-ornithine and carbamoyl phosphate: step 1/3.</text>
</comment>
<comment type="subcellular location">
    <subcellularLocation>
        <location evidence="2">Cytoplasm</location>
    </subcellularLocation>
</comment>
<comment type="similarity">
    <text evidence="2">Belongs to the aspartate/ornithine carbamoyltransferase superfamily. OTCase family.</text>
</comment>
<accession>Q3A9W4</accession>
<protein>
    <recommendedName>
        <fullName evidence="2">Ornithine carbamoyltransferase</fullName>
        <shortName evidence="2">OTCase</shortName>
        <ecNumber evidence="2">2.1.3.3</ecNumber>
    </recommendedName>
</protein>
<dbReference type="EC" id="2.1.3.3" evidence="2"/>
<dbReference type="EMBL" id="CP000141">
    <property type="protein sequence ID" value="ABB15940.1"/>
    <property type="molecule type" value="Genomic_DNA"/>
</dbReference>
<dbReference type="SMR" id="Q3A9W4"/>
<dbReference type="FunCoup" id="Q3A9W4">
    <property type="interactions" value="398"/>
</dbReference>
<dbReference type="STRING" id="246194.CHY_2261"/>
<dbReference type="KEGG" id="chy:CHY_2261"/>
<dbReference type="eggNOG" id="COG0078">
    <property type="taxonomic scope" value="Bacteria"/>
</dbReference>
<dbReference type="HOGENOM" id="CLU_043846_3_2_9"/>
<dbReference type="InParanoid" id="Q3A9W4"/>
<dbReference type="OrthoDB" id="9802587at2"/>
<dbReference type="UniPathway" id="UPA00068">
    <property type="reaction ID" value="UER00112"/>
</dbReference>
<dbReference type="Proteomes" id="UP000002706">
    <property type="component" value="Chromosome"/>
</dbReference>
<dbReference type="GO" id="GO:0005737">
    <property type="term" value="C:cytoplasm"/>
    <property type="evidence" value="ECO:0007669"/>
    <property type="project" value="UniProtKB-SubCell"/>
</dbReference>
<dbReference type="GO" id="GO:0016597">
    <property type="term" value="F:amino acid binding"/>
    <property type="evidence" value="ECO:0007669"/>
    <property type="project" value="InterPro"/>
</dbReference>
<dbReference type="GO" id="GO:0004585">
    <property type="term" value="F:ornithine carbamoyltransferase activity"/>
    <property type="evidence" value="ECO:0007669"/>
    <property type="project" value="UniProtKB-UniRule"/>
</dbReference>
<dbReference type="GO" id="GO:0042450">
    <property type="term" value="P:arginine biosynthetic process via ornithine"/>
    <property type="evidence" value="ECO:0007669"/>
    <property type="project" value="TreeGrafter"/>
</dbReference>
<dbReference type="GO" id="GO:0019240">
    <property type="term" value="P:citrulline biosynthetic process"/>
    <property type="evidence" value="ECO:0007669"/>
    <property type="project" value="TreeGrafter"/>
</dbReference>
<dbReference type="GO" id="GO:0006526">
    <property type="term" value="P:L-arginine biosynthetic process"/>
    <property type="evidence" value="ECO:0007669"/>
    <property type="project" value="UniProtKB-UniRule"/>
</dbReference>
<dbReference type="FunFam" id="3.40.50.1370:FF:000008">
    <property type="entry name" value="Ornithine carbamoyltransferase"/>
    <property type="match status" value="1"/>
</dbReference>
<dbReference type="FunFam" id="3.40.50.1370:FF:000016">
    <property type="entry name" value="Ornithine carbamoyltransferase"/>
    <property type="match status" value="1"/>
</dbReference>
<dbReference type="Gene3D" id="3.40.50.1370">
    <property type="entry name" value="Aspartate/ornithine carbamoyltransferase"/>
    <property type="match status" value="2"/>
</dbReference>
<dbReference type="HAMAP" id="MF_01109">
    <property type="entry name" value="OTCase"/>
    <property type="match status" value="1"/>
</dbReference>
<dbReference type="InterPro" id="IPR006132">
    <property type="entry name" value="Asp/Orn_carbamoyltranf_P-bd"/>
</dbReference>
<dbReference type="InterPro" id="IPR006130">
    <property type="entry name" value="Asp/Orn_carbamoylTrfase"/>
</dbReference>
<dbReference type="InterPro" id="IPR036901">
    <property type="entry name" value="Asp/Orn_carbamoylTrfase_sf"/>
</dbReference>
<dbReference type="InterPro" id="IPR006131">
    <property type="entry name" value="Asp_carbamoyltransf_Asp/Orn-bd"/>
</dbReference>
<dbReference type="InterPro" id="IPR002292">
    <property type="entry name" value="Orn/put_carbamltrans"/>
</dbReference>
<dbReference type="InterPro" id="IPR024904">
    <property type="entry name" value="OTCase_ArgI"/>
</dbReference>
<dbReference type="NCBIfam" id="TIGR00658">
    <property type="entry name" value="orni_carb_tr"/>
    <property type="match status" value="1"/>
</dbReference>
<dbReference type="NCBIfam" id="NF001986">
    <property type="entry name" value="PRK00779.1"/>
    <property type="match status" value="1"/>
</dbReference>
<dbReference type="PANTHER" id="PTHR45753">
    <property type="entry name" value="ORNITHINE CARBAMOYLTRANSFERASE, MITOCHONDRIAL"/>
    <property type="match status" value="1"/>
</dbReference>
<dbReference type="PANTHER" id="PTHR45753:SF3">
    <property type="entry name" value="ORNITHINE TRANSCARBAMYLASE, MITOCHONDRIAL"/>
    <property type="match status" value="1"/>
</dbReference>
<dbReference type="Pfam" id="PF00185">
    <property type="entry name" value="OTCace"/>
    <property type="match status" value="1"/>
</dbReference>
<dbReference type="Pfam" id="PF02729">
    <property type="entry name" value="OTCace_N"/>
    <property type="match status" value="1"/>
</dbReference>
<dbReference type="PRINTS" id="PR00100">
    <property type="entry name" value="AOTCASE"/>
</dbReference>
<dbReference type="PRINTS" id="PR00102">
    <property type="entry name" value="OTCASE"/>
</dbReference>
<dbReference type="SUPFAM" id="SSF53671">
    <property type="entry name" value="Aspartate/ornithine carbamoyltransferase"/>
    <property type="match status" value="1"/>
</dbReference>
<dbReference type="PROSITE" id="PS00097">
    <property type="entry name" value="CARBAMOYLTRANSFERASE"/>
    <property type="match status" value="1"/>
</dbReference>
<reference key="1">
    <citation type="journal article" date="2005" name="PLoS Genet.">
        <title>Life in hot carbon monoxide: the complete genome sequence of Carboxydothermus hydrogenoformans Z-2901.</title>
        <authorList>
            <person name="Wu M."/>
            <person name="Ren Q."/>
            <person name="Durkin A.S."/>
            <person name="Daugherty S.C."/>
            <person name="Brinkac L.M."/>
            <person name="Dodson R.J."/>
            <person name="Madupu R."/>
            <person name="Sullivan S.A."/>
            <person name="Kolonay J.F."/>
            <person name="Nelson W.C."/>
            <person name="Tallon L.J."/>
            <person name="Jones K.M."/>
            <person name="Ulrich L.E."/>
            <person name="Gonzalez J.M."/>
            <person name="Zhulin I.B."/>
            <person name="Robb F.T."/>
            <person name="Eisen J.A."/>
        </authorList>
    </citation>
    <scope>NUCLEOTIDE SEQUENCE [LARGE SCALE GENOMIC DNA]</scope>
    <source>
        <strain>ATCC BAA-161 / DSM 6008 / Z-2901</strain>
    </source>
</reference>
<feature type="chain" id="PRO_1000137088" description="Ornithine carbamoyltransferase">
    <location>
        <begin position="1"/>
        <end position="311"/>
    </location>
</feature>
<feature type="binding site" evidence="2">
    <location>
        <begin position="57"/>
        <end position="60"/>
    </location>
    <ligand>
        <name>carbamoyl phosphate</name>
        <dbReference type="ChEBI" id="CHEBI:58228"/>
    </ligand>
</feature>
<feature type="binding site" evidence="2">
    <location>
        <position position="84"/>
    </location>
    <ligand>
        <name>carbamoyl phosphate</name>
        <dbReference type="ChEBI" id="CHEBI:58228"/>
    </ligand>
</feature>
<feature type="binding site" evidence="2">
    <location>
        <position position="108"/>
    </location>
    <ligand>
        <name>carbamoyl phosphate</name>
        <dbReference type="ChEBI" id="CHEBI:58228"/>
    </ligand>
</feature>
<feature type="binding site" evidence="2">
    <location>
        <begin position="135"/>
        <end position="138"/>
    </location>
    <ligand>
        <name>carbamoyl phosphate</name>
        <dbReference type="ChEBI" id="CHEBI:58228"/>
    </ligand>
</feature>
<feature type="binding site" evidence="2">
    <location>
        <position position="166"/>
    </location>
    <ligand>
        <name>L-ornithine</name>
        <dbReference type="ChEBI" id="CHEBI:46911"/>
    </ligand>
</feature>
<feature type="binding site" evidence="2">
    <location>
        <position position="230"/>
    </location>
    <ligand>
        <name>L-ornithine</name>
        <dbReference type="ChEBI" id="CHEBI:46911"/>
    </ligand>
</feature>
<feature type="binding site" evidence="2">
    <location>
        <begin position="234"/>
        <end position="235"/>
    </location>
    <ligand>
        <name>L-ornithine</name>
        <dbReference type="ChEBI" id="CHEBI:46911"/>
    </ligand>
</feature>
<feature type="binding site" evidence="2">
    <location>
        <begin position="270"/>
        <end position="271"/>
    </location>
    <ligand>
        <name>carbamoyl phosphate</name>
        <dbReference type="ChEBI" id="CHEBI:58228"/>
    </ligand>
</feature>
<feature type="binding site" evidence="2">
    <location>
        <position position="298"/>
    </location>
    <ligand>
        <name>carbamoyl phosphate</name>
        <dbReference type="ChEBI" id="CHEBI:58228"/>
    </ligand>
</feature>
<gene>
    <name evidence="2" type="primary">argF</name>
    <name type="ordered locus">CHY_2261</name>
</gene>
<evidence type="ECO:0000250" key="1"/>
<evidence type="ECO:0000255" key="2">
    <source>
        <dbReference type="HAMAP-Rule" id="MF_01109"/>
    </source>
</evidence>
<name>OTC_CARHZ</name>
<organism>
    <name type="scientific">Carboxydothermus hydrogenoformans (strain ATCC BAA-161 / DSM 6008 / Z-2901)</name>
    <dbReference type="NCBI Taxonomy" id="246194"/>
    <lineage>
        <taxon>Bacteria</taxon>
        <taxon>Bacillati</taxon>
        <taxon>Bacillota</taxon>
        <taxon>Clostridia</taxon>
        <taxon>Thermoanaerobacterales</taxon>
        <taxon>Thermoanaerobacteraceae</taxon>
        <taxon>Carboxydothermus</taxon>
    </lineage>
</organism>
<keyword id="KW-0028">Amino-acid biosynthesis</keyword>
<keyword id="KW-0055">Arginine biosynthesis</keyword>
<keyword id="KW-0963">Cytoplasm</keyword>
<keyword id="KW-1185">Reference proteome</keyword>
<keyword id="KW-0808">Transferase</keyword>